<keyword id="KW-0007">Acetylation</keyword>
<keyword id="KW-0009">Actin-binding</keyword>
<keyword id="KW-0025">Alternative splicing</keyword>
<keyword id="KW-0053">Apoptosis</keyword>
<keyword id="KW-0965">Cell junction</keyword>
<keyword id="KW-1003">Cell membrane</keyword>
<keyword id="KW-0963">Cytoplasm</keyword>
<keyword id="KW-0206">Cytoskeleton</keyword>
<keyword id="KW-0472">Membrane</keyword>
<keyword id="KW-0597">Phosphoprotein</keyword>
<keyword id="KW-1185">Reference proteome</keyword>
<keyword id="KW-0043">Tumor suppressor</keyword>
<gene>
    <name evidence="10" type="primary">Epb41l3</name>
    <name evidence="10" type="synonym">Dal1</name>
    <name evidence="10" type="synonym">Epb4.1l3</name>
    <name type="synonym">Kiaa0987</name>
</gene>
<comment type="function">
    <text evidence="1">Tumor suppressor that inhibits cell proliferation and promotes apoptosis. Modulates the activity of protein arginine N-methyltransferases, including PRMT3 and PRMT5 (By similarity).</text>
</comment>
<comment type="subunit">
    <text evidence="2">Interacts (via FERM domain) with CADM1. Interacts (via FERM domain) with PRMT3; the interaction is direct and inhibits the protein-arginine N-methyltransferase activity of PRMT3. Interacts with PRMT5. Interacts with PRMT6.</text>
</comment>
<comment type="subunit">
    <molecule>Isoform 2</molecule>
    <text evidence="5">Has the complete spectrin--actin-binding (SAB) domain and fully interacts with spectrin and actin.</text>
</comment>
<comment type="subcellular location">
    <subcellularLocation>
        <location evidence="1">Cytoplasm</location>
        <location evidence="1">Cytoskeleton</location>
    </subcellularLocation>
    <subcellularLocation>
        <location evidence="5">Cell membrane</location>
        <topology evidence="5">Peripheral membrane protein</topology>
        <orientation evidence="5">Cytoplasmic side</orientation>
    </subcellularLocation>
    <subcellularLocation>
        <location evidence="1">Cytoplasm</location>
    </subcellularLocation>
    <subcellularLocation>
        <location evidence="5">Cell junction</location>
    </subcellularLocation>
    <text>Detected in the cytoplasm of actively dividing cells.</text>
</comment>
<comment type="alternative products">
    <event type="alternative splicing"/>
    <isoform>
        <id>Q9WV92-1</id>
        <name>1</name>
        <name>4.1B-brain</name>
        <sequence type="displayed"/>
    </isoform>
    <isoform>
        <id>Q9WV92-2</id>
        <name>2</name>
        <name>4.1B-heart</name>
        <sequence type="described" ref="VSP_000490 VSP_000489"/>
    </isoform>
    <isoform>
        <id>Q9WV92-3</id>
        <name>3</name>
        <name>4.1B-kidney</name>
        <sequence type="described" ref="VSP_000490"/>
    </isoform>
    <isoform>
        <id>Q9WV92-4</id>
        <name>4</name>
        <name>4.1b-brain</name>
        <sequence type="described" ref="VSP_000491"/>
    </isoform>
    <isoform>
        <id>Q9WV92-5</id>
        <name>5</name>
        <name>4.1B-heart</name>
        <sequence type="described" ref="VSP_000490 VSP_000489 VSP_000491"/>
    </isoform>
    <isoform>
        <id>Q9WV92-6</id>
        <name>6</name>
        <name>4.1B-kidney</name>
        <sequence type="described" ref="VSP_000490 VSP_000491"/>
    </isoform>
    <isoform>
        <id>Q9WV92-7</id>
        <name>7</name>
        <sequence type="described" ref="VSP_000487 VSP_000490 VSP_000488 VSP_000491"/>
    </isoform>
    <isoform>
        <id>Q9WV92-8</id>
        <name>8</name>
        <sequence type="described" ref="VSP_000487 VSP_023063 VSP_000491"/>
    </isoform>
    <text>Experimental confirmation may be lacking for some isoforms.</text>
</comment>
<comment type="tissue specificity">
    <text evidence="5">Detected in brain (at protein level). Highest expression in brain, lower in testis, adrenal gland, heart and kidney. Also present in muscle and epithelial cells. Isoform 1 is expressed in brain, isoform 2 is expressed in heart and isoform 3 is mostly expressed in kidney but also in heart and brain. Isoform 6 seems to be most abundant in kidney while isoform 4 and isoform 5 are predominantly expressed in heart and brain.</text>
</comment>
<comment type="miscellaneous">
    <text>The complete SAB domain is present only in the heart-specific isoforms (isoform 2 and isoform 5).</text>
</comment>
<comment type="miscellaneous">
    <molecule>Isoform 7</molecule>
    <text evidence="9">Inferred from the cDNA sequence of Ref.2.</text>
</comment>
<comment type="sequence caution" evidence="9">
    <conflict type="erroneous initiation">
        <sequence resource="EMBL-CDS" id="AAD51365"/>
    </conflict>
    <text>Truncated N-terminus.</text>
</comment>
<reference key="1">
    <citation type="journal article" date="2000" name="J. Biol. Chem.">
        <title>Molecular and functional characterization of protein 4.1B, a novel member of the protein 4.1 family with high level, focal expression in brain.</title>
        <authorList>
            <person name="Parra M."/>
            <person name="Gascard P."/>
            <person name="Walensky L.D."/>
            <person name="Gimm J.A."/>
            <person name="Blackshaw S."/>
            <person name="Chan N."/>
            <person name="Takakuwa Y."/>
            <person name="Berger T."/>
            <person name="Lee G."/>
            <person name="Chasis J.A."/>
            <person name="Snyder S.H."/>
            <person name="Mohandas N."/>
            <person name="Conboy J.G."/>
        </authorList>
    </citation>
    <scope>NUCLEOTIDE SEQUENCE [MRNA] (ISOFORMS 1; 2; 3; 4; 5 AND 6)</scope>
    <scope>SUBUNIT</scope>
    <scope>SUBCELLULAR LOCATION</scope>
    <scope>ACTIN-BINDING</scope>
    <scope>TISSUE SPECIFICITY</scope>
    <source>
        <tissue>Brain</tissue>
    </source>
</reference>
<reference key="2">
    <citation type="submission" date="1999-08" db="EMBL/GenBank/DDBJ databases">
        <title>Mouse DAL-1 (mDAL-1) cDNA sequence.</title>
        <authorList>
            <person name="Azam M."/>
            <person name="Andrabi S."/>
            <person name="Lin L."/>
            <person name="Newsham I."/>
            <person name="Chishti A.H."/>
        </authorList>
    </citation>
    <scope>NUCLEOTIDE SEQUENCE [MRNA] OF 6-929 (ISOFORM 7)</scope>
    <source>
        <strain>BALB/cJ</strain>
        <tissue>Brain</tissue>
    </source>
</reference>
<reference key="3">
    <citation type="journal article" date="2004" name="DNA Res.">
        <title>Prediction of the coding sequences of mouse homologues of KIAA gene: IV. The complete nucleotide sequences of 500 mouse KIAA-homologous cDNAs identified by screening of terminal sequences of cDNA clones randomly sampled from size-fractionated libraries.</title>
        <authorList>
            <person name="Okazaki N."/>
            <person name="Kikuno R."/>
            <person name="Ohara R."/>
            <person name="Inamoto S."/>
            <person name="Koseki H."/>
            <person name="Hiraoka S."/>
            <person name="Saga Y."/>
            <person name="Seino S."/>
            <person name="Nishimura M."/>
            <person name="Kaisho T."/>
            <person name="Hoshino K."/>
            <person name="Kitamura H."/>
            <person name="Nagase T."/>
            <person name="Ohara O."/>
            <person name="Koga H."/>
        </authorList>
    </citation>
    <scope>NUCLEOTIDE SEQUENCE [LARGE SCALE MRNA] OF 202-929 (ISOFORM 8)</scope>
    <source>
        <tissue>Fetal brain</tissue>
    </source>
</reference>
<reference key="4">
    <citation type="submission" date="2000-03" db="EMBL/GenBank/DDBJ databases">
        <authorList>
            <person name="Marra M."/>
            <person name="Hillier L."/>
            <person name="Kucaba T."/>
            <person name="Martin J."/>
            <person name="Beck C."/>
            <person name="Wylie T."/>
            <person name="Underwood K."/>
            <person name="Steptoe M."/>
            <person name="Theising B."/>
            <person name="Allen M."/>
            <person name="Bowers Y."/>
            <person name="Person B."/>
            <person name="Swaller T."/>
            <person name="Gibbons M."/>
            <person name="Pape D."/>
            <person name="Harvey N."/>
            <person name="Schurk R."/>
            <person name="Ritter E."/>
            <person name="Kohn S."/>
            <person name="Shin T."/>
            <person name="Jackson Y."/>
            <person name="Cardenas M."/>
            <person name="McCann R."/>
            <person name="Waterston R."/>
            <person name="Wilson R."/>
        </authorList>
    </citation>
    <scope>NUCLEOTIDE SEQUENCE [MRNA] OF 719-929 (ISOFORMS 4/5/6/7)</scope>
</reference>
<reference key="5">
    <citation type="journal article" date="2004" name="Mol. Cell. Proteomics">
        <title>Phosphoproteomic analysis of the developing mouse brain.</title>
        <authorList>
            <person name="Ballif B.A."/>
            <person name="Villen J."/>
            <person name="Beausoleil S.A."/>
            <person name="Schwartz D."/>
            <person name="Gygi S.P."/>
        </authorList>
    </citation>
    <scope>IDENTIFICATION BY MASS SPECTROMETRY [LARGE SCALE ANALYSIS]</scope>
    <source>
        <tissue>Embryonic brain</tissue>
    </source>
</reference>
<reference key="6">
    <citation type="journal article" date="2005" name="Nat. Biotechnol.">
        <title>Immunoaffinity profiling of tyrosine phosphorylation in cancer cells.</title>
        <authorList>
            <person name="Rush J."/>
            <person name="Moritz A."/>
            <person name="Lee K.A."/>
            <person name="Guo A."/>
            <person name="Goss V.L."/>
            <person name="Spek E.J."/>
            <person name="Zhang H."/>
            <person name="Zha X.-M."/>
            <person name="Polakiewicz R.D."/>
            <person name="Comb M.J."/>
        </authorList>
    </citation>
    <scope>IDENTIFICATION BY MASS SPECTROMETRY [LARGE SCALE ANALYSIS]</scope>
</reference>
<reference key="7">
    <citation type="journal article" date="2006" name="Mol. Cell. Proteomics">
        <title>Comprehensive identification of phosphorylation sites in postsynaptic density preparations.</title>
        <authorList>
            <person name="Trinidad J.C."/>
            <person name="Specht C.G."/>
            <person name="Thalhammer A."/>
            <person name="Schoepfer R."/>
            <person name="Burlingame A.L."/>
        </authorList>
    </citation>
    <scope>PHOSPHORYLATION [LARGE SCALE ANALYSIS] AT SER-96 AND THR-923</scope>
    <scope>IDENTIFICATION BY MASS SPECTROMETRY [LARGE SCALE ANALYSIS]</scope>
    <source>
        <tissue>Brain</tissue>
    </source>
</reference>
<reference key="8">
    <citation type="journal article" date="2007" name="Mol. Cell. Proteomics">
        <title>Qualitative and quantitative analyses of protein phosphorylation in naive and stimulated mouse synaptosomal preparations.</title>
        <authorList>
            <person name="Munton R.P."/>
            <person name="Tweedie-Cullen R."/>
            <person name="Livingstone-Zatchej M."/>
            <person name="Weinandy F."/>
            <person name="Waidelich M."/>
            <person name="Longo D."/>
            <person name="Gehrig P."/>
            <person name="Potthast F."/>
            <person name="Rutishauser D."/>
            <person name="Gerrits B."/>
            <person name="Panse C."/>
            <person name="Schlapbach R."/>
            <person name="Mansuy I.M."/>
        </authorList>
    </citation>
    <scope>IDENTIFICATION BY MASS SPECTROMETRY [LARGE SCALE ANALYSIS]</scope>
    <source>
        <tissue>Brain cortex</tissue>
    </source>
</reference>
<reference key="9">
    <citation type="journal article" date="2007" name="Proc. Natl. Acad. Sci. U.S.A.">
        <title>Large-scale phosphorylation analysis of mouse liver.</title>
        <authorList>
            <person name="Villen J."/>
            <person name="Beausoleil S.A."/>
            <person name="Gerber S.A."/>
            <person name="Gygi S.P."/>
        </authorList>
    </citation>
    <scope>IDENTIFICATION BY MASS SPECTROMETRY [LARGE SCALE ANALYSIS]</scope>
    <source>
        <tissue>Liver</tissue>
    </source>
</reference>
<reference key="10">
    <citation type="journal article" date="2009" name="Mol. Cell. Proteomics">
        <title>Large scale localization of protein phosphorylation by use of electron capture dissociation mass spectrometry.</title>
        <authorList>
            <person name="Sweet S.M."/>
            <person name="Bailey C.M."/>
            <person name="Cunningham D.L."/>
            <person name="Heath J.K."/>
            <person name="Cooper H.J."/>
        </authorList>
    </citation>
    <scope>PHOSPHORYLATION [LARGE SCALE ANALYSIS] AT SER-96</scope>
    <scope>IDENTIFICATION BY MASS SPECTROMETRY [LARGE SCALE ANALYSIS]</scope>
    <source>
        <tissue>Embryonic fibroblast</tissue>
    </source>
</reference>
<reference key="11">
    <citation type="journal article" date="2010" name="Cell">
        <title>A tissue-specific atlas of mouse protein phosphorylation and expression.</title>
        <authorList>
            <person name="Huttlin E.L."/>
            <person name="Jedrychowski M.P."/>
            <person name="Elias J.E."/>
            <person name="Goswami T."/>
            <person name="Rad R."/>
            <person name="Beausoleil S.A."/>
            <person name="Villen J."/>
            <person name="Haas W."/>
            <person name="Sowa M.E."/>
            <person name="Gygi S.P."/>
        </authorList>
    </citation>
    <scope>PHOSPHORYLATION [LARGE SCALE ANALYSIS] AT SER-451; SER-486; THR-495; THR-518; SER-543; THR-545; SER-547; THR-725; SER-802 AND SER-804</scope>
    <scope>PHOSPHORYLATION [LARGE SCALE ANALYSIS] AT SER-543 (ISOFORMS 3 AND 6)</scope>
    <scope>PHOSPHORYLATION [LARGE SCALE ANALYSIS] AT SER-525 (ISOFORM 7)</scope>
    <scope>PHOSPHORYLATION [LARGE SCALE ANALYSIS] AT SER-451 (ISOFORMS 7 AND 8)</scope>
    <scope>IDENTIFICATION BY MASS SPECTROMETRY [LARGE SCALE ANALYSIS]</scope>
    <source>
        <tissue>Brain</tissue>
        <tissue>Brown adipose tissue</tissue>
        <tissue>Heart</tissue>
        <tissue>Kidney</tissue>
        <tissue>Liver</tissue>
        <tissue>Lung</tissue>
        <tissue>Spleen</tissue>
        <tissue>Testis</tissue>
    </source>
</reference>
<proteinExistence type="evidence at protein level"/>
<dbReference type="EMBL" id="AF152247">
    <property type="protein sequence ID" value="AAD38048.1"/>
    <property type="molecule type" value="mRNA"/>
</dbReference>
<dbReference type="EMBL" id="AF177146">
    <property type="protein sequence ID" value="AAD51365.1"/>
    <property type="status" value="ALT_INIT"/>
    <property type="molecule type" value="mRNA"/>
</dbReference>
<dbReference type="EMBL" id="AK173080">
    <property type="protein sequence ID" value="BAD32358.1"/>
    <property type="molecule type" value="mRNA"/>
</dbReference>
<dbReference type="CCDS" id="CCDS28952.1">
    <molecule id="Q9WV92-1"/>
</dbReference>
<dbReference type="RefSeq" id="NP_001342665.1">
    <molecule id="Q9WV92-1"/>
    <property type="nucleotide sequence ID" value="NM_001355736.1"/>
</dbReference>
<dbReference type="RefSeq" id="NP_001411688.1">
    <molecule id="Q9WV92-8"/>
    <property type="nucleotide sequence ID" value="NM_001424759.1"/>
</dbReference>
<dbReference type="RefSeq" id="NP_038841.1">
    <molecule id="Q9WV92-1"/>
    <property type="nucleotide sequence ID" value="NM_013813.2"/>
</dbReference>
<dbReference type="RefSeq" id="XP_011244586.1">
    <property type="nucleotide sequence ID" value="XM_011246284.1"/>
</dbReference>
<dbReference type="RefSeq" id="XP_011244591.1">
    <property type="nucleotide sequence ID" value="XM_011246289.1"/>
</dbReference>
<dbReference type="RefSeq" id="XP_017172724.1">
    <property type="nucleotide sequence ID" value="XM_017317235.1"/>
</dbReference>
<dbReference type="RefSeq" id="XP_017172725.1">
    <property type="nucleotide sequence ID" value="XM_017317236.1"/>
</dbReference>
<dbReference type="RefSeq" id="XP_030105343.1">
    <molecule id="Q9WV92-3"/>
    <property type="nucleotide sequence ID" value="XM_030249483.1"/>
</dbReference>
<dbReference type="RefSeq" id="XP_030105347.1">
    <molecule id="Q9WV92-4"/>
    <property type="nucleotide sequence ID" value="XM_030249487.2"/>
</dbReference>
<dbReference type="RefSeq" id="XP_030105349.1">
    <molecule id="Q9WV92-6"/>
    <property type="nucleotide sequence ID" value="XM_030249489.1"/>
</dbReference>
<dbReference type="RefSeq" id="XP_030105354.1">
    <molecule id="Q9WV92-7"/>
    <property type="nucleotide sequence ID" value="XM_030249494.1"/>
</dbReference>
<dbReference type="SMR" id="Q9WV92"/>
<dbReference type="BioGRID" id="199461">
    <property type="interactions" value="36"/>
</dbReference>
<dbReference type="FunCoup" id="Q9WV92">
    <property type="interactions" value="1062"/>
</dbReference>
<dbReference type="IntAct" id="Q9WV92">
    <property type="interactions" value="16"/>
</dbReference>
<dbReference type="STRING" id="10090.ENSMUSP00000079098"/>
<dbReference type="GlyGen" id="Q9WV92">
    <property type="glycosylation" value="8 sites, 1 O-linked glycan (8 sites)"/>
</dbReference>
<dbReference type="iPTMnet" id="Q9WV92"/>
<dbReference type="PhosphoSitePlus" id="Q9WV92"/>
<dbReference type="SwissPalm" id="Q9WV92"/>
<dbReference type="jPOST" id="Q9WV92"/>
<dbReference type="PaxDb" id="10090-ENSMUSP00000108300"/>
<dbReference type="PeptideAtlas" id="Q9WV92"/>
<dbReference type="ProteomicsDB" id="277738">
    <molecule id="Q9WV92-1"/>
</dbReference>
<dbReference type="ProteomicsDB" id="277739">
    <molecule id="Q9WV92-2"/>
</dbReference>
<dbReference type="ProteomicsDB" id="277740">
    <molecule id="Q9WV92-3"/>
</dbReference>
<dbReference type="ProteomicsDB" id="277741">
    <molecule id="Q9WV92-4"/>
</dbReference>
<dbReference type="ProteomicsDB" id="277742">
    <molecule id="Q9WV92-5"/>
</dbReference>
<dbReference type="ProteomicsDB" id="277743">
    <molecule id="Q9WV92-6"/>
</dbReference>
<dbReference type="ProteomicsDB" id="277744">
    <molecule id="Q9WV92-7"/>
</dbReference>
<dbReference type="ProteomicsDB" id="277745">
    <molecule id="Q9WV92-8"/>
</dbReference>
<dbReference type="Pumba" id="Q9WV92"/>
<dbReference type="Antibodypedia" id="21920">
    <property type="antibodies" value="243 antibodies from 30 providers"/>
</dbReference>
<dbReference type="DNASU" id="13823"/>
<dbReference type="Ensembl" id="ENSMUST00000080208.7">
    <molecule id="Q9WV92-1"/>
    <property type="protein sequence ID" value="ENSMUSP00000079098.6"/>
    <property type="gene ID" value="ENSMUSG00000024044.20"/>
</dbReference>
<dbReference type="Ensembl" id="ENSMUST00000112680.8">
    <molecule id="Q9WV92-2"/>
    <property type="protein sequence ID" value="ENSMUSP00000108300.2"/>
    <property type="gene ID" value="ENSMUSG00000024044.20"/>
</dbReference>
<dbReference type="GeneID" id="13823"/>
<dbReference type="KEGG" id="mmu:13823"/>
<dbReference type="UCSC" id="uc008dkp.1">
    <molecule id="Q9WV92-1"/>
    <property type="organism name" value="mouse"/>
</dbReference>
<dbReference type="UCSC" id="uc008dkq.1">
    <molecule id="Q9WV92-7"/>
    <property type="organism name" value="mouse"/>
</dbReference>
<dbReference type="UCSC" id="uc008dkr.1">
    <molecule id="Q9WV92-8"/>
    <property type="organism name" value="mouse"/>
</dbReference>
<dbReference type="AGR" id="MGI:103008"/>
<dbReference type="CTD" id="23136"/>
<dbReference type="MGI" id="MGI:103008">
    <property type="gene designation" value="Epb41l3"/>
</dbReference>
<dbReference type="VEuPathDB" id="HostDB:ENSMUSG00000024044"/>
<dbReference type="eggNOG" id="KOG3527">
    <property type="taxonomic scope" value="Eukaryota"/>
</dbReference>
<dbReference type="GeneTree" id="ENSGT00940000157047"/>
<dbReference type="HOGENOM" id="CLU_003623_3_1_1"/>
<dbReference type="InParanoid" id="Q9WV92"/>
<dbReference type="OMA" id="SSEEEXA"/>
<dbReference type="PhylomeDB" id="Q9WV92"/>
<dbReference type="TreeFam" id="TF351626"/>
<dbReference type="Reactome" id="R-MMU-6794361">
    <property type="pathway name" value="Neurexins and neuroligins"/>
</dbReference>
<dbReference type="BioGRID-ORCS" id="13823">
    <property type="hits" value="6 hits in 46 CRISPR screens"/>
</dbReference>
<dbReference type="CD-CODE" id="CE726F99">
    <property type="entry name" value="Postsynaptic density"/>
</dbReference>
<dbReference type="ChiTaRS" id="Epb41l3">
    <property type="organism name" value="mouse"/>
</dbReference>
<dbReference type="PRO" id="PR:Q9WV92"/>
<dbReference type="Proteomes" id="UP000000589">
    <property type="component" value="Chromosome 17"/>
</dbReference>
<dbReference type="RNAct" id="Q9WV92">
    <property type="molecule type" value="protein"/>
</dbReference>
<dbReference type="Bgee" id="ENSMUSG00000024044">
    <property type="expression patterns" value="Expressed in small intestine Peyer's patch and 242 other cell types or tissues"/>
</dbReference>
<dbReference type="ExpressionAtlas" id="Q9WV92">
    <property type="expression patterns" value="baseline and differential"/>
</dbReference>
<dbReference type="GO" id="GO:0005911">
    <property type="term" value="C:cell-cell junction"/>
    <property type="evidence" value="ECO:0000250"/>
    <property type="project" value="HGNC-UCL"/>
</dbReference>
<dbReference type="GO" id="GO:0005856">
    <property type="term" value="C:cytoskeleton"/>
    <property type="evidence" value="ECO:0007669"/>
    <property type="project" value="UniProtKB-SubCell"/>
</dbReference>
<dbReference type="GO" id="GO:0005829">
    <property type="term" value="C:cytosol"/>
    <property type="evidence" value="ECO:0000304"/>
    <property type="project" value="Reactome"/>
</dbReference>
<dbReference type="GO" id="GO:0044224">
    <property type="term" value="C:juxtaparanode region of axon"/>
    <property type="evidence" value="ECO:0000314"/>
    <property type="project" value="BHF-UCL"/>
</dbReference>
<dbReference type="GO" id="GO:0033270">
    <property type="term" value="C:paranode region of axon"/>
    <property type="evidence" value="ECO:0000314"/>
    <property type="project" value="BHF-UCL"/>
</dbReference>
<dbReference type="GO" id="GO:0005886">
    <property type="term" value="C:plasma membrane"/>
    <property type="evidence" value="ECO:0007669"/>
    <property type="project" value="UniProtKB-SubCell"/>
</dbReference>
<dbReference type="GO" id="GO:0014069">
    <property type="term" value="C:postsynaptic density"/>
    <property type="evidence" value="ECO:0000314"/>
    <property type="project" value="MGI"/>
</dbReference>
<dbReference type="GO" id="GO:0003779">
    <property type="term" value="F:actin binding"/>
    <property type="evidence" value="ECO:0007669"/>
    <property type="project" value="UniProtKB-KW"/>
</dbReference>
<dbReference type="GO" id="GO:0106006">
    <property type="term" value="F:cytoskeletal protein-membrane anchor activity"/>
    <property type="evidence" value="ECO:0000304"/>
    <property type="project" value="BHF-UCL"/>
</dbReference>
<dbReference type="GO" id="GO:0005200">
    <property type="term" value="F:structural constituent of cytoskeleton"/>
    <property type="evidence" value="ECO:0000304"/>
    <property type="project" value="BHF-UCL"/>
</dbReference>
<dbReference type="GO" id="GO:0006915">
    <property type="term" value="P:apoptotic process"/>
    <property type="evidence" value="ECO:0007669"/>
    <property type="project" value="UniProtKB-KW"/>
</dbReference>
<dbReference type="GO" id="GO:0061564">
    <property type="term" value="P:axon development"/>
    <property type="evidence" value="ECO:0000315"/>
    <property type="project" value="MGI"/>
</dbReference>
<dbReference type="GO" id="GO:0030866">
    <property type="term" value="P:cortical actin cytoskeleton organization"/>
    <property type="evidence" value="ECO:0007669"/>
    <property type="project" value="InterPro"/>
</dbReference>
<dbReference type="GO" id="GO:0030865">
    <property type="term" value="P:cortical cytoskeleton organization"/>
    <property type="evidence" value="ECO:0000304"/>
    <property type="project" value="BHF-UCL"/>
</dbReference>
<dbReference type="GO" id="GO:0043217">
    <property type="term" value="P:myelin maintenance"/>
    <property type="evidence" value="ECO:0000315"/>
    <property type="project" value="BHF-UCL"/>
</dbReference>
<dbReference type="GO" id="GO:0048812">
    <property type="term" value="P:neuron projection morphogenesis"/>
    <property type="evidence" value="ECO:0000315"/>
    <property type="project" value="BHF-UCL"/>
</dbReference>
<dbReference type="GO" id="GO:0030913">
    <property type="term" value="P:paranodal junction assembly"/>
    <property type="evidence" value="ECO:0000315"/>
    <property type="project" value="BHF-UCL"/>
</dbReference>
<dbReference type="GO" id="GO:1990227">
    <property type="term" value="P:paranodal junction maintenance"/>
    <property type="evidence" value="ECO:0000315"/>
    <property type="project" value="MGI"/>
</dbReference>
<dbReference type="GO" id="GO:0071205">
    <property type="term" value="P:protein localization to juxtaparanode region of axon"/>
    <property type="evidence" value="ECO:0000315"/>
    <property type="project" value="BHF-UCL"/>
</dbReference>
<dbReference type="GO" id="GO:0002175">
    <property type="term" value="P:protein localization to paranode region of axon"/>
    <property type="evidence" value="ECO:0000315"/>
    <property type="project" value="BHF-UCL"/>
</dbReference>
<dbReference type="GO" id="GO:0072659">
    <property type="term" value="P:protein localization to plasma membrane"/>
    <property type="evidence" value="ECO:0000315"/>
    <property type="project" value="BHF-UCL"/>
</dbReference>
<dbReference type="GO" id="GO:0008360">
    <property type="term" value="P:regulation of cell shape"/>
    <property type="evidence" value="ECO:0000315"/>
    <property type="project" value="BHF-UCL"/>
</dbReference>
<dbReference type="CDD" id="cd14473">
    <property type="entry name" value="FERM_B-lobe"/>
    <property type="match status" value="1"/>
</dbReference>
<dbReference type="CDD" id="cd13184">
    <property type="entry name" value="FERM_C_4_1_family"/>
    <property type="match status" value="1"/>
</dbReference>
<dbReference type="CDD" id="cd17203">
    <property type="entry name" value="FERM_F1_EPB41L3"/>
    <property type="match status" value="1"/>
</dbReference>
<dbReference type="FunFam" id="1.20.80.10:FF:000001">
    <property type="entry name" value="Erythrocyte membrane protein band 4.1"/>
    <property type="match status" value="1"/>
</dbReference>
<dbReference type="FunFam" id="2.30.29.30:FF:000001">
    <property type="entry name" value="Erythrocyte membrane protein band 4.1"/>
    <property type="match status" value="1"/>
</dbReference>
<dbReference type="FunFam" id="3.10.20.90:FF:000002">
    <property type="entry name" value="Erythrocyte protein band 4.1-like 3"/>
    <property type="match status" value="1"/>
</dbReference>
<dbReference type="Gene3D" id="1.20.80.10">
    <property type="match status" value="1"/>
</dbReference>
<dbReference type="Gene3D" id="3.10.20.90">
    <property type="entry name" value="Phosphatidylinositol 3-kinase Catalytic Subunit, Chain A, domain 1"/>
    <property type="match status" value="1"/>
</dbReference>
<dbReference type="Gene3D" id="2.30.29.30">
    <property type="entry name" value="Pleckstrin-homology domain (PH domain)/Phosphotyrosine-binding domain (PTB)"/>
    <property type="match status" value="1"/>
</dbReference>
<dbReference type="InterPro" id="IPR030691">
    <property type="entry name" value="Band4.1-L3_FERM_F1"/>
</dbReference>
<dbReference type="InterPro" id="IPR008379">
    <property type="entry name" value="Band_4.1_C"/>
</dbReference>
<dbReference type="InterPro" id="IPR019749">
    <property type="entry name" value="Band_41_domain"/>
</dbReference>
<dbReference type="InterPro" id="IPR000798">
    <property type="entry name" value="Ez/rad/moesin-like"/>
</dbReference>
<dbReference type="InterPro" id="IPR014847">
    <property type="entry name" value="FA"/>
</dbReference>
<dbReference type="InterPro" id="IPR014352">
    <property type="entry name" value="FERM/acyl-CoA-bd_prot_sf"/>
</dbReference>
<dbReference type="InterPro" id="IPR035963">
    <property type="entry name" value="FERM_2"/>
</dbReference>
<dbReference type="InterPro" id="IPR019748">
    <property type="entry name" value="FERM_central"/>
</dbReference>
<dbReference type="InterPro" id="IPR019747">
    <property type="entry name" value="FERM_CS"/>
</dbReference>
<dbReference type="InterPro" id="IPR000299">
    <property type="entry name" value="FERM_domain"/>
</dbReference>
<dbReference type="InterPro" id="IPR018979">
    <property type="entry name" value="FERM_N"/>
</dbReference>
<dbReference type="InterPro" id="IPR018980">
    <property type="entry name" value="FERM_PH-like_C"/>
</dbReference>
<dbReference type="InterPro" id="IPR011993">
    <property type="entry name" value="PH-like_dom_sf"/>
</dbReference>
<dbReference type="InterPro" id="IPR007477">
    <property type="entry name" value="SAB_dom"/>
</dbReference>
<dbReference type="InterPro" id="IPR029071">
    <property type="entry name" value="Ubiquitin-like_domsf"/>
</dbReference>
<dbReference type="PANTHER" id="PTHR23280">
    <property type="entry name" value="4.1 G PROTEIN"/>
    <property type="match status" value="1"/>
</dbReference>
<dbReference type="PANTHER" id="PTHR23280:SF20">
    <property type="entry name" value="BAND 4.1-LIKE PROTEIN 3"/>
    <property type="match status" value="1"/>
</dbReference>
<dbReference type="Pfam" id="PF05902">
    <property type="entry name" value="4_1_CTD"/>
    <property type="match status" value="1"/>
</dbReference>
<dbReference type="Pfam" id="PF08736">
    <property type="entry name" value="FA"/>
    <property type="match status" value="1"/>
</dbReference>
<dbReference type="Pfam" id="PF09380">
    <property type="entry name" value="FERM_C"/>
    <property type="match status" value="1"/>
</dbReference>
<dbReference type="Pfam" id="PF00373">
    <property type="entry name" value="FERM_M"/>
    <property type="match status" value="1"/>
</dbReference>
<dbReference type="Pfam" id="PF09379">
    <property type="entry name" value="FERM_N"/>
    <property type="match status" value="1"/>
</dbReference>
<dbReference type="Pfam" id="PF04382">
    <property type="entry name" value="SAB"/>
    <property type="match status" value="1"/>
</dbReference>
<dbReference type="PIRSF" id="PIRSF002304">
    <property type="entry name" value="Membrane_skeletal_4_1"/>
    <property type="match status" value="1"/>
</dbReference>
<dbReference type="PRINTS" id="PR00935">
    <property type="entry name" value="BAND41"/>
</dbReference>
<dbReference type="PRINTS" id="PR00661">
    <property type="entry name" value="ERMFAMILY"/>
</dbReference>
<dbReference type="SMART" id="SM00295">
    <property type="entry name" value="B41"/>
    <property type="match status" value="1"/>
</dbReference>
<dbReference type="SMART" id="SM01195">
    <property type="entry name" value="FA"/>
    <property type="match status" value="1"/>
</dbReference>
<dbReference type="SMART" id="SM01196">
    <property type="entry name" value="FERM_C"/>
    <property type="match status" value="1"/>
</dbReference>
<dbReference type="SUPFAM" id="SSF50729">
    <property type="entry name" value="PH domain-like"/>
    <property type="match status" value="1"/>
</dbReference>
<dbReference type="SUPFAM" id="SSF47031">
    <property type="entry name" value="Second domain of FERM"/>
    <property type="match status" value="1"/>
</dbReference>
<dbReference type="SUPFAM" id="SSF54236">
    <property type="entry name" value="Ubiquitin-like"/>
    <property type="match status" value="1"/>
</dbReference>
<dbReference type="PROSITE" id="PS00660">
    <property type="entry name" value="FERM_1"/>
    <property type="match status" value="1"/>
</dbReference>
<dbReference type="PROSITE" id="PS00661">
    <property type="entry name" value="FERM_2"/>
    <property type="match status" value="1"/>
</dbReference>
<dbReference type="PROSITE" id="PS50057">
    <property type="entry name" value="FERM_3"/>
    <property type="match status" value="1"/>
</dbReference>
<protein>
    <recommendedName>
        <fullName>Band 4.1-like protein 3</fullName>
    </recommendedName>
    <alternativeName>
        <fullName>4.1B</fullName>
    </alternativeName>
    <alternativeName>
        <fullName>Differentially expressed in adenocarcinoma of the lung protein 1</fullName>
        <shortName>DAL-1</shortName>
        <shortName>DAL1P</shortName>
        <shortName>mDAL-1</shortName>
    </alternativeName>
    <alternativeName>
        <fullName evidence="10">Erythrocyte membrane protein band 4.1-like 3</fullName>
    </alternativeName>
    <component>
        <recommendedName>
            <fullName>Band 4.1-like protein 3, N-terminally processed</fullName>
        </recommendedName>
    </component>
</protein>
<organism>
    <name type="scientific">Mus musculus</name>
    <name type="common">Mouse</name>
    <dbReference type="NCBI Taxonomy" id="10090"/>
    <lineage>
        <taxon>Eukaryota</taxon>
        <taxon>Metazoa</taxon>
        <taxon>Chordata</taxon>
        <taxon>Craniata</taxon>
        <taxon>Vertebrata</taxon>
        <taxon>Euteleostomi</taxon>
        <taxon>Mammalia</taxon>
        <taxon>Eutheria</taxon>
        <taxon>Euarchontoglires</taxon>
        <taxon>Glires</taxon>
        <taxon>Rodentia</taxon>
        <taxon>Myomorpha</taxon>
        <taxon>Muroidea</taxon>
        <taxon>Muridae</taxon>
        <taxon>Murinae</taxon>
        <taxon>Mus</taxon>
        <taxon>Mus</taxon>
    </lineage>
</organism>
<evidence type="ECO:0000250" key="1"/>
<evidence type="ECO:0000250" key="2">
    <source>
        <dbReference type="UniProtKB" id="Q9Y2J2"/>
    </source>
</evidence>
<evidence type="ECO:0000255" key="3">
    <source>
        <dbReference type="PROSITE-ProRule" id="PRU00084"/>
    </source>
</evidence>
<evidence type="ECO:0000256" key="4">
    <source>
        <dbReference type="SAM" id="MobiDB-lite"/>
    </source>
</evidence>
<evidence type="ECO:0000269" key="5">
    <source>
    </source>
</evidence>
<evidence type="ECO:0000303" key="6">
    <source>
    </source>
</evidence>
<evidence type="ECO:0000303" key="7">
    <source>
    </source>
</evidence>
<evidence type="ECO:0000303" key="8">
    <source ref="2"/>
</evidence>
<evidence type="ECO:0000305" key="9"/>
<evidence type="ECO:0000312" key="10">
    <source>
        <dbReference type="MGI" id="MGI:103008"/>
    </source>
</evidence>
<evidence type="ECO:0007744" key="11">
    <source>
    </source>
</evidence>
<evidence type="ECO:0007744" key="12">
    <source>
    </source>
</evidence>
<evidence type="ECO:0007744" key="13">
    <source>
    </source>
</evidence>
<feature type="chain" id="PRO_0000423195" description="Band 4.1-like protein 3">
    <location>
        <begin position="1"/>
        <end position="929"/>
    </location>
</feature>
<feature type="initiator methionine" description="Removed; alternate" evidence="2">
    <location>
        <position position="1"/>
    </location>
</feature>
<feature type="chain" id="PRO_0000219400" description="Band 4.1-like protein 3, N-terminally processed">
    <location>
        <begin position="2"/>
        <end position="929"/>
    </location>
</feature>
<feature type="domain" description="FERM" evidence="3">
    <location>
        <begin position="118"/>
        <end position="399"/>
    </location>
</feature>
<feature type="region of interest" description="Disordered" evidence="4">
    <location>
        <begin position="1"/>
        <end position="72"/>
    </location>
</feature>
<feature type="region of interest" description="Hydrophilic">
    <location>
        <begin position="402"/>
        <end position="528"/>
    </location>
</feature>
<feature type="region of interest" description="Disordered" evidence="4">
    <location>
        <begin position="490"/>
        <end position="554"/>
    </location>
</feature>
<feature type="region of interest" description="Spectrin--actin-binding">
    <location>
        <begin position="559"/>
        <end position="602"/>
    </location>
</feature>
<feature type="region of interest" description="Disordered" evidence="4">
    <location>
        <begin position="608"/>
        <end position="630"/>
    </location>
</feature>
<feature type="region of interest" description="Disordered" evidence="4">
    <location>
        <begin position="665"/>
        <end position="689"/>
    </location>
</feature>
<feature type="region of interest" description="Disordered" evidence="4">
    <location>
        <begin position="705"/>
        <end position="807"/>
    </location>
</feature>
<feature type="region of interest" description="C-terminal (CTD)">
    <location>
        <begin position="777"/>
        <end position="929"/>
    </location>
</feature>
<feature type="compositionally biased region" description="Low complexity" evidence="4">
    <location>
        <begin position="20"/>
        <end position="33"/>
    </location>
</feature>
<feature type="compositionally biased region" description="Basic and acidic residues" evidence="4">
    <location>
        <begin position="496"/>
        <end position="516"/>
    </location>
</feature>
<feature type="compositionally biased region" description="Basic and acidic residues" evidence="4">
    <location>
        <begin position="523"/>
        <end position="536"/>
    </location>
</feature>
<feature type="compositionally biased region" description="Basic and acidic residues" evidence="4">
    <location>
        <begin position="726"/>
        <end position="737"/>
    </location>
</feature>
<feature type="compositionally biased region" description="Low complexity" evidence="4">
    <location>
        <begin position="789"/>
        <end position="802"/>
    </location>
</feature>
<feature type="modified residue" description="N-acetylmethionine" evidence="2">
    <location>
        <position position="1"/>
    </location>
</feature>
<feature type="modified residue" description="N-acetylthreonine; in Band 4.1-like protein 3, N-terminally processed" evidence="2">
    <location>
        <position position="2"/>
    </location>
</feature>
<feature type="modified residue" description="Phosphoserine" evidence="11 12">
    <location>
        <position position="96"/>
    </location>
</feature>
<feature type="modified residue" description="Phosphoserine" evidence="2">
    <location>
        <position position="428"/>
    </location>
</feature>
<feature type="modified residue" description="Phosphoserine" evidence="13">
    <location>
        <position position="451"/>
    </location>
</feature>
<feature type="modified residue" description="Phosphoserine" evidence="13">
    <location>
        <position position="486"/>
    </location>
</feature>
<feature type="modified residue" description="Phosphothreonine" evidence="13">
    <location>
        <position position="495"/>
    </location>
</feature>
<feature type="modified residue" description="Phosphothreonine" evidence="13">
    <location>
        <position position="518"/>
    </location>
</feature>
<feature type="modified residue" description="Phosphoserine" evidence="13">
    <location>
        <position position="543"/>
    </location>
</feature>
<feature type="modified residue" description="Phosphothreonine" evidence="13">
    <location>
        <position position="545"/>
    </location>
</feature>
<feature type="modified residue" description="Phosphoserine" evidence="13">
    <location>
        <position position="547"/>
    </location>
</feature>
<feature type="modified residue" description="Phosphothreonine" evidence="13">
    <location>
        <position position="725"/>
    </location>
</feature>
<feature type="modified residue" description="Phosphoserine" evidence="13">
    <location>
        <position position="802"/>
    </location>
</feature>
<feature type="modified residue" description="Phosphoserine" evidence="13">
    <location>
        <position position="804"/>
    </location>
</feature>
<feature type="modified residue" description="Phosphothreonine" evidence="11">
    <location>
        <position position="923"/>
    </location>
</feature>
<feature type="splice variant" id="VSP_000487" description="In isoform 7 and isoform 8." evidence="7 8">
    <location>
        <begin position="455"/>
        <end position="472"/>
    </location>
</feature>
<feature type="splice variant" id="VSP_023063" description="In isoform 8." evidence="7">
    <original>K</original>
    <variation>KSPPGHGAADSCPPSPPSAHPDPPPPTELRRRCKEKERAEPSSLESEAQGKAYLGDQDVAFSYRQPAGKGTTLFSFSLQLPESFPSLLDEDGYLSFPNLSETNLLPQSWQHFLPIRSPSLLPCFLFIFFFLLSASFSVPYALTLSFPLALCLCYLEPKAASLSASLDNDPSDSSEEE</variation>
    <location>
        <position position="528"/>
    </location>
</feature>
<feature type="splice variant" id="VSP_000490" description="In isoform 2, isoform 3, isoform 5, isoform 6 and isoform 7." evidence="6 8">
    <location>
        <begin position="547"/>
        <end position="558"/>
    </location>
</feature>
<feature type="splice variant" id="VSP_000489" description="In isoform 2 and isoform 5." evidence="6">
    <original>D</original>
    <variation>NSLIKRIKGENVYVKHSNLMLED</variation>
    <location>
        <position position="559"/>
    </location>
</feature>
<feature type="splice variant" id="VSP_000488" description="In isoform 7." evidence="8">
    <location>
        <begin position="623"/>
        <end position="663"/>
    </location>
</feature>
<feature type="splice variant" id="VSP_000491" description="In isoform 4, isoform 5, isoform 6, isoform 7 and isoform 8." evidence="6 7 8">
    <original>ALAQAIKEAKEQHPDMSVTKVVVHKETEITPEDGED</original>
    <variation>E</variation>
    <location>
        <begin position="894"/>
        <end position="929"/>
    </location>
</feature>
<feature type="sequence conflict" description="In Ref. 2; AAD51365." evidence="9" ref="2">
    <original>GSDSE</original>
    <variation>RIRLR</variation>
    <location>
        <begin position="6"/>
        <end position="10"/>
    </location>
</feature>
<feature type="sequence conflict" description="In Ref. 2; AAD51365." evidence="9" ref="2">
    <original>Q</original>
    <variation>R</variation>
    <location>
        <position position="28"/>
    </location>
</feature>
<feature type="sequence conflict" description="In Ref. 2; AAD51365." evidence="9" ref="2">
    <original>A</original>
    <variation>V</variation>
    <location>
        <position position="288"/>
    </location>
</feature>
<feature type="sequence conflict" description="In Ref. 2; AAD51365." evidence="9" ref="2">
    <original>V</original>
    <variation>G</variation>
    <location>
        <position position="306"/>
    </location>
</feature>
<feature type="modified residue" description="Phosphoserine" evidence="13">
    <location sequence="Q9WV92-3">
        <position position="543"/>
    </location>
</feature>
<feature type="modified residue" description="Phosphoserine" evidence="13">
    <location sequence="Q9WV92-6">
        <position position="543"/>
    </location>
</feature>
<feature type="modified residue" description="Phosphoserine" evidence="13">
    <location sequence="Q9WV92-7">
        <position position="451"/>
    </location>
</feature>
<feature type="modified residue" description="Phosphoserine" evidence="13">
    <location sequence="Q9WV92-7">
        <position position="525"/>
    </location>
</feature>
<feature type="modified residue" description="Phosphoserine" evidence="13">
    <location sequence="Q9WV92-8">
        <position position="451"/>
    </location>
</feature>
<name>E41L3_MOUSE</name>
<sequence length="929" mass="103338">MTTESGSDSESKPDQEAEPQEAAGPQGQAGAQPGPEPAGGNGSLNGEKQQPALEQFPEAAAHSTPVKREIGDKDRDFAAAAAKQLEYQQFEDDKLSQRSSSSKLSRSPLKIVKRPKSMQCKVTLLDGSEYGCDVDKRSRGQVLFDKVCEHLNLLEKDYFGLTYRDAENQKNWLDPAKEIKKQIRSGAWHFSFNVKFYPPDPAQLSEDITRYYLCLQLRDDIVSGRLPCSFVTLALLGSYTVQSELGDYDPDECGNDYISEFRFAPNHTKELEDKVIELHKSHRGMTPAEAEMHFLENAKKLSMYGVDLHHAKDSEGVEIMLGVCASGLLIYRDRLRINRFAWPKVLKISYKRNNFYIKIRPGEFEQFESTIGFKLPNHRAAKRLWKVCVEHHTFFRLLLPEAPPKKFLTLGSKFRYSGRTQAQTRRASALIDRPAPYFERSSSKRYTMSRSLDGASVSENHEIYMKDSVSAAEVGTGQYATTKGISQTNLITTVTPEKKAEEERVEEEDRRKKAEEATPVTALRHEGKTDSERTDTAADGETSATESDQEEDAEIKAQDLDKTQDELMKHQTNISELKRTFLETSTETALTNEWEKRLSTSPVRLAARQEDAPMIEPLVPEETKQSSGEKLMDGSEILSLLESARKPTEFIGGVSSTTQSWVQKLETKTEPVEAEVESTPHPQPLSTEKVLQETILVEERHVMSVHASGDASHTARDEVDAAESTPTDRRHTGKGKEGSSVTEAAKEQRGEEVDQSAPEQEQPATVSHEEEQASTIRTSEGLEQKSHFESSTVRVESTSVGSISPGGAKLEISTKEVPVVHTETKTITYESSQVDPGADLEPGVLMSAQTITSETTSTTTTTHITKTVKGGISETRIEKRIVITGDADIDHDQALAQAIKEAKEQHPDMSVTKVVVHKETEITPEDGED</sequence>
<accession>Q9WV92</accession>
<accession>Q69ZT8</accession>
<accession>Q9R102</accession>